<sequence length="516" mass="57115">MAYVLTETAAGYALLKAADKKIHKSSSLVEDLNTAEKVAEQFKIHRFEKFQSAANALEEANAIIEGKVSENLQKLLEDAKSDKKATLIVSEAKLGNAINKLGLNFQVVSDAASLDLQRAIKQFLPELLPGLDDSALKQMSLGLAHSMGRHKLKFSADKVDTMIIQAIALLDDLDKELNTYAMRCKEWYGWHFPELAKMITDSAAYARIILTMGVRSNASETDLSEILPEEVEEQVKAAAEVSMGTEITEDDLNNIKALAEQIVDFAAYREQLSNYLSSRMKAIAPNLTAMVGELVGARLIAHAGSLTSLAKAPASTVQILGAEKALFRALKTKHDTPKYGIIYHASLVGQASGKNKGRIARTLAAKAAVSLRYDCFDEERDESDDFGLENRAKVEGRLSQLEGRDMRTTSKVVREQPKVEITEARAYNADADSTAAAAAAAPTADSDDEESETEEVEEKKSKKDKKKDKKEKKDKKKDKKRKRDDDKEDKESSKKSKKDKKEKKEKKEKKAKKEKK</sequence>
<proteinExistence type="inferred from homology"/>
<protein>
    <recommendedName>
        <fullName>Nucleolar protein 58</fullName>
    </recommendedName>
</protein>
<feature type="chain" id="PRO_0000350979" description="Nucleolar protein 58">
    <location>
        <begin position="1"/>
        <end position="516"/>
    </location>
</feature>
<feature type="domain" description="Nop" evidence="2">
    <location>
        <begin position="283"/>
        <end position="403"/>
    </location>
</feature>
<feature type="region of interest" description="Disordered" evidence="3">
    <location>
        <begin position="423"/>
        <end position="516"/>
    </location>
</feature>
<feature type="compositionally biased region" description="Low complexity" evidence="3">
    <location>
        <begin position="429"/>
        <end position="444"/>
    </location>
</feature>
<feature type="compositionally biased region" description="Acidic residues" evidence="3">
    <location>
        <begin position="445"/>
        <end position="456"/>
    </location>
</feature>
<feature type="compositionally biased region" description="Basic residues" evidence="3">
    <location>
        <begin position="462"/>
        <end position="482"/>
    </location>
</feature>
<feature type="compositionally biased region" description="Basic and acidic residues" evidence="3">
    <location>
        <begin position="483"/>
        <end position="494"/>
    </location>
</feature>
<feature type="compositionally biased region" description="Basic residues" evidence="3">
    <location>
        <begin position="495"/>
        <end position="516"/>
    </location>
</feature>
<accession>Q59S06</accession>
<accession>A0A1D8PPD6</accession>
<accession>Q59RK5</accession>
<organism>
    <name type="scientific">Candida albicans (strain SC5314 / ATCC MYA-2876)</name>
    <name type="common">Yeast</name>
    <dbReference type="NCBI Taxonomy" id="237561"/>
    <lineage>
        <taxon>Eukaryota</taxon>
        <taxon>Fungi</taxon>
        <taxon>Dikarya</taxon>
        <taxon>Ascomycota</taxon>
        <taxon>Saccharomycotina</taxon>
        <taxon>Pichiomycetes</taxon>
        <taxon>Debaryomycetaceae</taxon>
        <taxon>Candida/Lodderomyces clade</taxon>
        <taxon>Candida</taxon>
    </lineage>
</organism>
<evidence type="ECO:0000250" key="1"/>
<evidence type="ECO:0000255" key="2">
    <source>
        <dbReference type="PROSITE-ProRule" id="PRU00690"/>
    </source>
</evidence>
<evidence type="ECO:0000256" key="3">
    <source>
        <dbReference type="SAM" id="MobiDB-lite"/>
    </source>
</evidence>
<evidence type="ECO:0000305" key="4"/>
<gene>
    <name type="primary">NOP58</name>
    <name type="ordered locus">CAALFM_C600370CA</name>
    <name type="ORF">CaO19.1199</name>
    <name type="ORF">CaO19.8790</name>
</gene>
<dbReference type="EMBL" id="CP017628">
    <property type="protein sequence ID" value="AOW29986.1"/>
    <property type="molecule type" value="Genomic_DNA"/>
</dbReference>
<dbReference type="SMR" id="Q59S06"/>
<dbReference type="BioGRID" id="1229015">
    <property type="interactions" value="3"/>
</dbReference>
<dbReference type="FunCoup" id="Q59S06">
    <property type="interactions" value="1720"/>
</dbReference>
<dbReference type="STRING" id="237561.Q59S06"/>
<dbReference type="EnsemblFungi" id="C6_00370C_A-T">
    <property type="protein sequence ID" value="C6_00370C_A-T-p1"/>
    <property type="gene ID" value="C6_00370C_A"/>
</dbReference>
<dbReference type="KEGG" id="cal:CAALFM_C600370CA"/>
<dbReference type="CGD" id="CAL0000190357">
    <property type="gene designation" value="NOP5"/>
</dbReference>
<dbReference type="VEuPathDB" id="FungiDB:C6_00370C_A"/>
<dbReference type="HOGENOM" id="CLU_015495_5_2_1"/>
<dbReference type="InParanoid" id="Q59S06"/>
<dbReference type="OrthoDB" id="6780543at2759"/>
<dbReference type="PRO" id="PR:Q59S06"/>
<dbReference type="Proteomes" id="UP000000559">
    <property type="component" value="Chromosome 6"/>
</dbReference>
<dbReference type="GO" id="GO:0031428">
    <property type="term" value="C:box C/D methylation guide snoRNP complex"/>
    <property type="evidence" value="ECO:0000318"/>
    <property type="project" value="GO_Central"/>
</dbReference>
<dbReference type="GO" id="GO:0005730">
    <property type="term" value="C:nucleolus"/>
    <property type="evidence" value="ECO:0007669"/>
    <property type="project" value="UniProtKB-SubCell"/>
</dbReference>
<dbReference type="GO" id="GO:0032040">
    <property type="term" value="C:small-subunit processome"/>
    <property type="evidence" value="ECO:0000314"/>
    <property type="project" value="CGD"/>
</dbReference>
<dbReference type="GO" id="GO:0030515">
    <property type="term" value="F:snoRNA binding"/>
    <property type="evidence" value="ECO:0000318"/>
    <property type="project" value="GO_Central"/>
</dbReference>
<dbReference type="GO" id="GO:0017069">
    <property type="term" value="F:snRNA binding"/>
    <property type="evidence" value="ECO:0007669"/>
    <property type="project" value="EnsemblFungi"/>
</dbReference>
<dbReference type="GO" id="GO:0000494">
    <property type="term" value="P:box C/D sno(s)RNA 3'-end processing"/>
    <property type="evidence" value="ECO:0007669"/>
    <property type="project" value="EnsemblFungi"/>
</dbReference>
<dbReference type="GO" id="GO:0000480">
    <property type="term" value="P:endonucleolytic cleavage in 5'-ETS of tricistronic rRNA transcript (SSU-rRNA, 5.8S rRNA, LSU-rRNA)"/>
    <property type="evidence" value="ECO:0007669"/>
    <property type="project" value="EnsemblFungi"/>
</dbReference>
<dbReference type="GO" id="GO:0000447">
    <property type="term" value="P:endonucleolytic cleavage in ITS1 to separate SSU-rRNA from 5.8S rRNA and LSU-rRNA from tricistronic rRNA transcript (SSU-rRNA, 5.8S rRNA, LSU-rRNA)"/>
    <property type="evidence" value="ECO:0007669"/>
    <property type="project" value="EnsemblFungi"/>
</dbReference>
<dbReference type="GO" id="GO:0000472">
    <property type="term" value="P:endonucleolytic cleavage to generate mature 5'-end of SSU-rRNA from (SSU-rRNA, 5.8S rRNA, LSU-rRNA)"/>
    <property type="evidence" value="ECO:0007669"/>
    <property type="project" value="EnsemblFungi"/>
</dbReference>
<dbReference type="GO" id="GO:0030447">
    <property type="term" value="P:filamentous growth"/>
    <property type="evidence" value="ECO:0000315"/>
    <property type="project" value="CGD"/>
</dbReference>
<dbReference type="GO" id="GO:1902570">
    <property type="term" value="P:protein localization to nucleolus"/>
    <property type="evidence" value="ECO:0007669"/>
    <property type="project" value="EnsemblFungi"/>
</dbReference>
<dbReference type="GO" id="GO:0000452">
    <property type="term" value="P:snoRNA guided rRNA 2'-O-methylation"/>
    <property type="evidence" value="ECO:0007669"/>
    <property type="project" value="EnsemblFungi"/>
</dbReference>
<dbReference type="FunFam" id="1.10.246.90:FF:000003">
    <property type="entry name" value="Nucleolar protein 58"/>
    <property type="match status" value="1"/>
</dbReference>
<dbReference type="FunFam" id="1.10.287.4070:FF:000001">
    <property type="entry name" value="Probable Nucleolar protein 58"/>
    <property type="match status" value="1"/>
</dbReference>
<dbReference type="Gene3D" id="1.10.287.4070">
    <property type="match status" value="1"/>
</dbReference>
<dbReference type="Gene3D" id="1.10.246.90">
    <property type="entry name" value="Nop domain"/>
    <property type="match status" value="1"/>
</dbReference>
<dbReference type="InterPro" id="IPR045056">
    <property type="entry name" value="Nop56/Nop58"/>
</dbReference>
<dbReference type="InterPro" id="IPR012974">
    <property type="entry name" value="NOP58/56_N"/>
</dbReference>
<dbReference type="InterPro" id="IPR042239">
    <property type="entry name" value="Nop_C"/>
</dbReference>
<dbReference type="InterPro" id="IPR002687">
    <property type="entry name" value="Nop_dom"/>
</dbReference>
<dbReference type="InterPro" id="IPR036070">
    <property type="entry name" value="Nop_dom_sf"/>
</dbReference>
<dbReference type="InterPro" id="IPR012976">
    <property type="entry name" value="NOSIC"/>
</dbReference>
<dbReference type="PANTHER" id="PTHR10894">
    <property type="entry name" value="NUCLEOLAR PROTEIN 5 NUCLEOLAR PROTEIN NOP5 NOP58"/>
    <property type="match status" value="1"/>
</dbReference>
<dbReference type="PANTHER" id="PTHR10894:SF1">
    <property type="entry name" value="NUCLEOLAR PROTEIN 58"/>
    <property type="match status" value="1"/>
</dbReference>
<dbReference type="Pfam" id="PF01798">
    <property type="entry name" value="Nop"/>
    <property type="match status" value="1"/>
</dbReference>
<dbReference type="Pfam" id="PF08156">
    <property type="entry name" value="NOP5NT"/>
    <property type="match status" value="1"/>
</dbReference>
<dbReference type="SMART" id="SM00931">
    <property type="entry name" value="NOSIC"/>
    <property type="match status" value="1"/>
</dbReference>
<dbReference type="SUPFAM" id="SSF89124">
    <property type="entry name" value="Nop domain"/>
    <property type="match status" value="1"/>
</dbReference>
<dbReference type="PROSITE" id="PS51358">
    <property type="entry name" value="NOP"/>
    <property type="match status" value="1"/>
</dbReference>
<name>NOP58_CANAL</name>
<comment type="function">
    <text evidence="1">Required for pre-18S rRNA processing. May bind microtubules (By similarity).</text>
</comment>
<comment type="subcellular location">
    <subcellularLocation>
        <location evidence="1">Nucleus</location>
        <location evidence="1">Nucleolus</location>
    </subcellularLocation>
</comment>
<comment type="similarity">
    <text evidence="4">Belongs to the NOP5/NOP56 family.</text>
</comment>
<reference key="1">
    <citation type="journal article" date="2004" name="Proc. Natl. Acad. Sci. U.S.A.">
        <title>The diploid genome sequence of Candida albicans.</title>
        <authorList>
            <person name="Jones T."/>
            <person name="Federspiel N.A."/>
            <person name="Chibana H."/>
            <person name="Dungan J."/>
            <person name="Kalman S."/>
            <person name="Magee B.B."/>
            <person name="Newport G."/>
            <person name="Thorstenson Y.R."/>
            <person name="Agabian N."/>
            <person name="Magee P.T."/>
            <person name="Davis R.W."/>
            <person name="Scherer S."/>
        </authorList>
    </citation>
    <scope>NUCLEOTIDE SEQUENCE [LARGE SCALE GENOMIC DNA]</scope>
    <source>
        <strain>SC5314 / ATCC MYA-2876</strain>
    </source>
</reference>
<reference key="2">
    <citation type="journal article" date="2007" name="Genome Biol.">
        <title>Assembly of the Candida albicans genome into sixteen supercontigs aligned on the eight chromosomes.</title>
        <authorList>
            <person name="van het Hoog M."/>
            <person name="Rast T.J."/>
            <person name="Martchenko M."/>
            <person name="Grindle S."/>
            <person name="Dignard D."/>
            <person name="Hogues H."/>
            <person name="Cuomo C."/>
            <person name="Berriman M."/>
            <person name="Scherer S."/>
            <person name="Magee B.B."/>
            <person name="Whiteway M."/>
            <person name="Chibana H."/>
            <person name="Nantel A."/>
            <person name="Magee P.T."/>
        </authorList>
    </citation>
    <scope>GENOME REANNOTATION</scope>
    <source>
        <strain>SC5314 / ATCC MYA-2876</strain>
    </source>
</reference>
<reference key="3">
    <citation type="journal article" date="2013" name="Genome Biol.">
        <title>Assembly of a phased diploid Candida albicans genome facilitates allele-specific measurements and provides a simple model for repeat and indel structure.</title>
        <authorList>
            <person name="Muzzey D."/>
            <person name="Schwartz K."/>
            <person name="Weissman J.S."/>
            <person name="Sherlock G."/>
        </authorList>
    </citation>
    <scope>NUCLEOTIDE SEQUENCE [LARGE SCALE GENOMIC DNA]</scope>
    <scope>GENOME REANNOTATION</scope>
    <source>
        <strain>SC5314 / ATCC MYA-2876</strain>
    </source>
</reference>
<keyword id="KW-0539">Nucleus</keyword>
<keyword id="KW-1185">Reference proteome</keyword>
<keyword id="KW-0687">Ribonucleoprotein</keyword>
<keyword id="KW-0690">Ribosome biogenesis</keyword>
<keyword id="KW-0698">rRNA processing</keyword>